<keyword id="KW-0210">Decarboxylase</keyword>
<keyword id="KW-0456">Lyase</keyword>
<keyword id="KW-0663">Pyridoxal phosphate</keyword>
<keyword id="KW-1185">Reference proteome</keyword>
<keyword id="KW-0745">Spermidine biosynthesis</keyword>
<evidence type="ECO:0000250" key="1">
    <source>
        <dbReference type="UniProtKB" id="A8FNH9"/>
    </source>
</evidence>
<evidence type="ECO:0000269" key="2">
    <source>
    </source>
</evidence>
<evidence type="ECO:0000303" key="3">
    <source>
    </source>
</evidence>
<evidence type="ECO:0000305" key="4"/>
<evidence type="ECO:0000312" key="5">
    <source>
        <dbReference type="EMBL" id="BAA17602.1"/>
    </source>
</evidence>
<organism>
    <name type="scientific">Synechocystis sp. (strain ATCC 27184 / PCC 6803 / Kazusa)</name>
    <dbReference type="NCBI Taxonomy" id="1111708"/>
    <lineage>
        <taxon>Bacteria</taxon>
        <taxon>Bacillati</taxon>
        <taxon>Cyanobacteriota</taxon>
        <taxon>Cyanophyceae</taxon>
        <taxon>Synechococcales</taxon>
        <taxon>Merismopediaceae</taxon>
        <taxon>Synechocystis</taxon>
    </lineage>
</organism>
<accession>P73562</accession>
<feature type="chain" id="PRO_0000460610" description="Carboxyaminopropylagmatine decarboxylase">
    <location>
        <begin position="1"/>
        <end position="387"/>
    </location>
</feature>
<feature type="modified residue" description="N6-(pyridoxal phosphate)lysine" evidence="1">
    <location>
        <position position="52"/>
    </location>
</feature>
<reference key="1">
    <citation type="journal article" date="1996" name="DNA Res.">
        <title>Sequence analysis of the genome of the unicellular cyanobacterium Synechocystis sp. strain PCC6803. II. Sequence determination of the entire genome and assignment of potential protein-coding regions.</title>
        <authorList>
            <person name="Kaneko T."/>
            <person name="Sato S."/>
            <person name="Kotani H."/>
            <person name="Tanaka A."/>
            <person name="Asamizu E."/>
            <person name="Nakamura Y."/>
            <person name="Miyajima N."/>
            <person name="Hirosawa M."/>
            <person name="Sugiura M."/>
            <person name="Sasamoto S."/>
            <person name="Kimura T."/>
            <person name="Hosouchi T."/>
            <person name="Matsuno A."/>
            <person name="Muraki A."/>
            <person name="Nakazaki N."/>
            <person name="Naruo K."/>
            <person name="Okumura S."/>
            <person name="Shimpo S."/>
            <person name="Takeuchi C."/>
            <person name="Wada T."/>
            <person name="Watanabe A."/>
            <person name="Yamada M."/>
            <person name="Yasuda M."/>
            <person name="Tabata S."/>
        </authorList>
    </citation>
    <scope>NUCLEOTIDE SEQUENCE [LARGE SCALE GENOMIC DNA]</scope>
    <source>
        <strain>ATCC 27184 / PCC 6803 / Kazusa</strain>
    </source>
</reference>
<reference key="2">
    <citation type="journal article" date="2023" name="Sci. Adv.">
        <title>A bacterial spermidine biosynthetic pathway via carboxyaminopropylagmatine.</title>
        <authorList>
            <person name="Xi H."/>
            <person name="Nie X."/>
            <person name="Gao F."/>
            <person name="Liang X."/>
            <person name="Li H."/>
            <person name="Zhou H."/>
            <person name="Cai Y."/>
            <person name="Yang C."/>
        </authorList>
    </citation>
    <scope>FUNCTION</scope>
    <scope>CATALYTIC ACTIVITY</scope>
    <scope>COFACTOR</scope>
    <scope>BIOPHYSICOCHEMICAL PROPERTIES</scope>
    <scope>PATHWAY</scope>
    <scope>DISRUPTION PHENOTYPE</scope>
    <source>
        <strain>ATCC 27184 / PCC 6803 / Kazusa</strain>
    </source>
</reference>
<name>CAPDC_SYNY3</name>
<comment type="function">
    <text evidence="2">Decarboxylase involved in the biosynthesis of spermidine via the carboxyaminopropylagmatine (CAPA) pathway (PubMed:37878710). Catalyzes the decarboxylation of CAPA to form aminopropylagmatine (APA) (PubMed:37878710). Can also decarboxylate carboxyspermidine and carboxynorspermidine, but not ornithine, arginine, lysine and meso-diaminopimelate (PubMed:37878710).</text>
</comment>
<comment type="catalytic activity">
    <reaction evidence="2">
        <text>N(1)-[(S)-3-amino-3-carboxypropyl]agmatine + H(+) = N(1)-(3-aminopropyl)agmatine + CO2</text>
        <dbReference type="Rhea" id="RHEA:78807"/>
        <dbReference type="ChEBI" id="CHEBI:15378"/>
        <dbReference type="ChEBI" id="CHEBI:16526"/>
        <dbReference type="ChEBI" id="CHEBI:64335"/>
        <dbReference type="ChEBI" id="CHEBI:229577"/>
        <dbReference type="EC" id="4.1.1.127"/>
    </reaction>
    <physiologicalReaction direction="left-to-right" evidence="2">
        <dbReference type="Rhea" id="RHEA:78808"/>
    </physiologicalReaction>
</comment>
<comment type="cofactor">
    <cofactor evidence="2">
        <name>pyridoxal 5'-phosphate</name>
        <dbReference type="ChEBI" id="CHEBI:597326"/>
    </cofactor>
</comment>
<comment type="biophysicochemical properties">
    <kinetics>
        <KM evidence="2">0.21 mM for CAPA</KM>
        <text evidence="2">kcat is 2.36 sec(-1) with CAPA as substrate.</text>
    </kinetics>
</comment>
<comment type="pathway">
    <text evidence="2">Amine and polyamine biosynthesis; spermidine biosynthesis.</text>
</comment>
<comment type="disruption phenotype">
    <text evidence="2">Deletion of the gene leads to substantial accumulation of agmatine and CAPA, and lack of APA and spermidine.</text>
</comment>
<comment type="similarity">
    <text evidence="4">Belongs to the Orn/Lys/Arg decarboxylase class-II family.</text>
</comment>
<dbReference type="EC" id="4.1.1.127" evidence="2"/>
<dbReference type="EMBL" id="BA000022">
    <property type="protein sequence ID" value="BAA17602.1"/>
    <property type="molecule type" value="Genomic_DNA"/>
</dbReference>
<dbReference type="PIR" id="S77268">
    <property type="entry name" value="S77268"/>
</dbReference>
<dbReference type="SMR" id="P73562"/>
<dbReference type="STRING" id="1148.gene:10498469"/>
<dbReference type="PaxDb" id="1148-1652682"/>
<dbReference type="EnsemblBacteria" id="BAA17602">
    <property type="protein sequence ID" value="BAA17602"/>
    <property type="gene ID" value="BAA17602"/>
</dbReference>
<dbReference type="KEGG" id="syn:sll0873"/>
<dbReference type="eggNOG" id="COG0019">
    <property type="taxonomic scope" value="Bacteria"/>
</dbReference>
<dbReference type="InParanoid" id="P73562"/>
<dbReference type="PhylomeDB" id="P73562"/>
<dbReference type="UniPathway" id="UPA00248"/>
<dbReference type="Proteomes" id="UP000001425">
    <property type="component" value="Chromosome"/>
</dbReference>
<dbReference type="GO" id="GO:0008836">
    <property type="term" value="F:diaminopimelate decarboxylase activity"/>
    <property type="evidence" value="ECO:0000318"/>
    <property type="project" value="GO_Central"/>
</dbReference>
<dbReference type="GO" id="GO:0009089">
    <property type="term" value="P:lysine biosynthetic process via diaminopimelate"/>
    <property type="evidence" value="ECO:0000318"/>
    <property type="project" value="GO_Central"/>
</dbReference>
<dbReference type="GO" id="GO:0045312">
    <property type="term" value="P:nor-spermidine biosynthetic process"/>
    <property type="evidence" value="ECO:0007669"/>
    <property type="project" value="InterPro"/>
</dbReference>
<dbReference type="GO" id="GO:0008295">
    <property type="term" value="P:spermidine biosynthetic process"/>
    <property type="evidence" value="ECO:0007669"/>
    <property type="project" value="UniProtKB-KW"/>
</dbReference>
<dbReference type="CDD" id="cd06829">
    <property type="entry name" value="PLPDE_III_CANSDC"/>
    <property type="match status" value="1"/>
</dbReference>
<dbReference type="FunFam" id="2.40.37.10:FF:000013">
    <property type="entry name" value="Carboxynorspermidine decarboxylase"/>
    <property type="match status" value="1"/>
</dbReference>
<dbReference type="FunFam" id="3.20.20.10:FF:000012">
    <property type="entry name" value="Carboxynorspermidine/carboxyspermidine decarboxylase"/>
    <property type="match status" value="1"/>
</dbReference>
<dbReference type="Gene3D" id="3.20.20.10">
    <property type="entry name" value="Alanine racemase"/>
    <property type="match status" value="1"/>
</dbReference>
<dbReference type="Gene3D" id="2.40.37.10">
    <property type="entry name" value="Lyase, Ornithine Decarboxylase, Chain A, domain 1"/>
    <property type="match status" value="1"/>
</dbReference>
<dbReference type="InterPro" id="IPR009006">
    <property type="entry name" value="Ala_racemase/Decarboxylase_C"/>
</dbReference>
<dbReference type="InterPro" id="IPR022643">
    <property type="entry name" value="De-COase2_C"/>
</dbReference>
<dbReference type="InterPro" id="IPR005730">
    <property type="entry name" value="Nsp_de-COase"/>
</dbReference>
<dbReference type="InterPro" id="IPR029066">
    <property type="entry name" value="PLP-binding_barrel"/>
</dbReference>
<dbReference type="NCBIfam" id="TIGR01047">
    <property type="entry name" value="nspC"/>
    <property type="match status" value="1"/>
</dbReference>
<dbReference type="PANTHER" id="PTHR43727:SF1">
    <property type="entry name" value="CARBOXYNORSPERMIDINE_CARBOXYSPERMIDINE DECARBOXYLASE"/>
    <property type="match status" value="1"/>
</dbReference>
<dbReference type="PANTHER" id="PTHR43727">
    <property type="entry name" value="DIAMINOPIMELATE DECARBOXYLASE"/>
    <property type="match status" value="1"/>
</dbReference>
<dbReference type="Pfam" id="PF00278">
    <property type="entry name" value="Orn_DAP_Arg_deC"/>
    <property type="match status" value="1"/>
</dbReference>
<dbReference type="PIRSF" id="PIRSF038941">
    <property type="entry name" value="NspC"/>
    <property type="match status" value="1"/>
</dbReference>
<dbReference type="SUPFAM" id="SSF50621">
    <property type="entry name" value="Alanine racemase C-terminal domain-like"/>
    <property type="match status" value="1"/>
</dbReference>
<dbReference type="SUPFAM" id="SSF51419">
    <property type="entry name" value="PLP-binding barrel"/>
    <property type="match status" value="1"/>
</dbReference>
<proteinExistence type="evidence at protein level"/>
<protein>
    <recommendedName>
        <fullName evidence="3">Carboxyaminopropylagmatine decarboxylase</fullName>
        <shortName evidence="3">CAPA decarboxylase</shortName>
        <shortName evidence="3">CAPADC</shortName>
        <ecNumber evidence="2">4.1.1.127</ecNumber>
    </recommendedName>
</protein>
<gene>
    <name evidence="5" type="ordered locus">sll0873</name>
</gene>
<sequence>MSSFAVNILENPRLSSLPSPCFVLEEELLQQNLAIFERLQQSAPIEVMLALKGFALFPCFPWLRSGLAGASASSLWEARLAAEEFGKEVHVYAPTYRPDDLPAIIPLASHITFNSLGQWHRYRESLKNTAVKAGLRINPEYSPVQTDLYNPCVSGSRLGVQAAMLAGNLPSGITGFLSHNLCESDHLALEKTLGQIEKLFGEYLPQIEWLNLGGGHLMTSQGYDMDYAIAVIGEFHQRHPHLRLIMEPGSAIAWQTGFLLSTVEDLIETPEFTHAMLDVSFTAHMPDCLEMPYRPEVRGARVPQTGDTVYRLGGSSCLAGDFLGDYAFDQPLQVGDRLIFEDMMHYTMVKTTTFNGVHHPAIGCLRRSGEFELWRTFGYEDYRNRLG</sequence>